<comment type="function">
    <text evidence="1">Catalyzes the methyl esterification of L-isoaspartyl residues in peptides and proteins that result from spontaneous decomposition of normal L-aspartyl and L-asparaginyl residues. It plays a role in the repair and/or degradation of damaged proteins.</text>
</comment>
<comment type="catalytic activity">
    <reaction evidence="1">
        <text>[protein]-L-isoaspartate + S-adenosyl-L-methionine = [protein]-L-isoaspartate alpha-methyl ester + S-adenosyl-L-homocysteine</text>
        <dbReference type="Rhea" id="RHEA:12705"/>
        <dbReference type="Rhea" id="RHEA-COMP:12143"/>
        <dbReference type="Rhea" id="RHEA-COMP:12144"/>
        <dbReference type="ChEBI" id="CHEBI:57856"/>
        <dbReference type="ChEBI" id="CHEBI:59789"/>
        <dbReference type="ChEBI" id="CHEBI:90596"/>
        <dbReference type="ChEBI" id="CHEBI:90598"/>
        <dbReference type="EC" id="2.1.1.77"/>
    </reaction>
</comment>
<comment type="subcellular location">
    <subcellularLocation>
        <location evidence="1">Cytoplasm</location>
    </subcellularLocation>
</comment>
<comment type="similarity">
    <text evidence="1">Belongs to the methyltransferase superfamily. L-isoaspartyl/D-aspartyl protein methyltransferase family.</text>
</comment>
<comment type="sequence caution" evidence="2">
    <conflict type="erroneous initiation">
        <sequence resource="EMBL-CDS" id="BAF87726"/>
    </conflict>
</comment>
<dbReference type="EC" id="2.1.1.77" evidence="1"/>
<dbReference type="EMBL" id="AP009384">
    <property type="protein sequence ID" value="BAF87726.1"/>
    <property type="status" value="ALT_INIT"/>
    <property type="molecule type" value="Genomic_DNA"/>
</dbReference>
<dbReference type="RefSeq" id="WP_043879119.1">
    <property type="nucleotide sequence ID" value="NC_009937.1"/>
</dbReference>
<dbReference type="SMR" id="A8I4G3"/>
<dbReference type="STRING" id="438753.AZC_1728"/>
<dbReference type="KEGG" id="azc:AZC_1728"/>
<dbReference type="eggNOG" id="COG2518">
    <property type="taxonomic scope" value="Bacteria"/>
</dbReference>
<dbReference type="HOGENOM" id="CLU_055432_2_0_5"/>
<dbReference type="Proteomes" id="UP000000270">
    <property type="component" value="Chromosome"/>
</dbReference>
<dbReference type="GO" id="GO:0005737">
    <property type="term" value="C:cytoplasm"/>
    <property type="evidence" value="ECO:0007669"/>
    <property type="project" value="UniProtKB-SubCell"/>
</dbReference>
<dbReference type="GO" id="GO:0004719">
    <property type="term" value="F:protein-L-isoaspartate (D-aspartate) O-methyltransferase activity"/>
    <property type="evidence" value="ECO:0007669"/>
    <property type="project" value="UniProtKB-UniRule"/>
</dbReference>
<dbReference type="GO" id="GO:0032259">
    <property type="term" value="P:methylation"/>
    <property type="evidence" value="ECO:0007669"/>
    <property type="project" value="UniProtKB-KW"/>
</dbReference>
<dbReference type="GO" id="GO:0036211">
    <property type="term" value="P:protein modification process"/>
    <property type="evidence" value="ECO:0007669"/>
    <property type="project" value="UniProtKB-UniRule"/>
</dbReference>
<dbReference type="GO" id="GO:0030091">
    <property type="term" value="P:protein repair"/>
    <property type="evidence" value="ECO:0007669"/>
    <property type="project" value="UniProtKB-UniRule"/>
</dbReference>
<dbReference type="CDD" id="cd02440">
    <property type="entry name" value="AdoMet_MTases"/>
    <property type="match status" value="1"/>
</dbReference>
<dbReference type="FunFam" id="3.40.50.150:FF:000010">
    <property type="entry name" value="Protein-L-isoaspartate O-methyltransferase"/>
    <property type="match status" value="1"/>
</dbReference>
<dbReference type="Gene3D" id="3.40.50.150">
    <property type="entry name" value="Vaccinia Virus protein VP39"/>
    <property type="match status" value="1"/>
</dbReference>
<dbReference type="HAMAP" id="MF_00090">
    <property type="entry name" value="PIMT"/>
    <property type="match status" value="1"/>
</dbReference>
<dbReference type="InterPro" id="IPR000682">
    <property type="entry name" value="PCMT"/>
</dbReference>
<dbReference type="InterPro" id="IPR029063">
    <property type="entry name" value="SAM-dependent_MTases_sf"/>
</dbReference>
<dbReference type="NCBIfam" id="TIGR00080">
    <property type="entry name" value="pimt"/>
    <property type="match status" value="1"/>
</dbReference>
<dbReference type="NCBIfam" id="NF001453">
    <property type="entry name" value="PRK00312.1"/>
    <property type="match status" value="1"/>
</dbReference>
<dbReference type="PANTHER" id="PTHR11579">
    <property type="entry name" value="PROTEIN-L-ISOASPARTATE O-METHYLTRANSFERASE"/>
    <property type="match status" value="1"/>
</dbReference>
<dbReference type="PANTHER" id="PTHR11579:SF0">
    <property type="entry name" value="PROTEIN-L-ISOASPARTATE(D-ASPARTATE) O-METHYLTRANSFERASE"/>
    <property type="match status" value="1"/>
</dbReference>
<dbReference type="Pfam" id="PF01135">
    <property type="entry name" value="PCMT"/>
    <property type="match status" value="1"/>
</dbReference>
<dbReference type="SUPFAM" id="SSF53335">
    <property type="entry name" value="S-adenosyl-L-methionine-dependent methyltransferases"/>
    <property type="match status" value="1"/>
</dbReference>
<dbReference type="PROSITE" id="PS01279">
    <property type="entry name" value="PCMT"/>
    <property type="match status" value="1"/>
</dbReference>
<accession>A8I4G3</accession>
<gene>
    <name evidence="1" type="primary">pcm</name>
    <name type="ordered locus">AZC_1728</name>
</gene>
<protein>
    <recommendedName>
        <fullName evidence="1">Protein-L-isoaspartate O-methyltransferase</fullName>
        <ecNumber evidence="1">2.1.1.77</ecNumber>
    </recommendedName>
    <alternativeName>
        <fullName evidence="1">L-isoaspartyl protein carboxyl methyltransferase</fullName>
    </alternativeName>
    <alternativeName>
        <fullName evidence="1">Protein L-isoaspartyl methyltransferase</fullName>
    </alternativeName>
    <alternativeName>
        <fullName evidence="1">Protein-beta-aspartate methyltransferase</fullName>
        <shortName evidence="1">PIMT</shortName>
    </alternativeName>
</protein>
<evidence type="ECO:0000255" key="1">
    <source>
        <dbReference type="HAMAP-Rule" id="MF_00090"/>
    </source>
</evidence>
<evidence type="ECO:0000305" key="2"/>
<name>PIMT_AZOC5</name>
<organism>
    <name type="scientific">Azorhizobium caulinodans (strain ATCC 43989 / DSM 5975 / JCM 20966 / LMG 6465 / NBRC 14845 / NCIMB 13405 / ORS 571)</name>
    <dbReference type="NCBI Taxonomy" id="438753"/>
    <lineage>
        <taxon>Bacteria</taxon>
        <taxon>Pseudomonadati</taxon>
        <taxon>Pseudomonadota</taxon>
        <taxon>Alphaproteobacteria</taxon>
        <taxon>Hyphomicrobiales</taxon>
        <taxon>Xanthobacteraceae</taxon>
        <taxon>Azorhizobium</taxon>
    </lineage>
</organism>
<sequence length="217" mass="23290">MTDSEAERAERAAFILSLRRRGIRDLAVLRALELVPRGLFVDPTLRRHAYEDVALPIACGQTMSQPSLVALMTEALALNAEHTVLEIGTGSGYQAAVLSHLAAQVVTMDRYRALVGEAQTRFQVLGLRNVAAFVGDGTQGLPGRAPYDRIMITAATGEVPRALVDQLKPGGVLIAPIGAPREVQKLRRFIKDGGNLEASDLMDVRFVPLVAGVAALL</sequence>
<proteinExistence type="inferred from homology"/>
<feature type="chain" id="PRO_0000351817" description="Protein-L-isoaspartate O-methyltransferase">
    <location>
        <begin position="1"/>
        <end position="217"/>
    </location>
</feature>
<feature type="active site" evidence="1">
    <location>
        <position position="64"/>
    </location>
</feature>
<keyword id="KW-0963">Cytoplasm</keyword>
<keyword id="KW-0489">Methyltransferase</keyword>
<keyword id="KW-1185">Reference proteome</keyword>
<keyword id="KW-0949">S-adenosyl-L-methionine</keyword>
<keyword id="KW-0808">Transferase</keyword>
<reference key="1">
    <citation type="submission" date="2007-04" db="EMBL/GenBank/DDBJ databases">
        <title>Complete genome sequence of the nitrogen-fixing bacterium Azorhizobium caulinodans ORS571.</title>
        <authorList>
            <person name="Lee K.B."/>
            <person name="Backer P.D."/>
            <person name="Aono T."/>
            <person name="Liu C.T."/>
            <person name="Suzuki S."/>
            <person name="Suzuki T."/>
            <person name="Kaneko T."/>
            <person name="Yamada M."/>
            <person name="Tabata S."/>
            <person name="Kupfer D.M."/>
            <person name="Najar F.Z."/>
            <person name="Wiley G.B."/>
            <person name="Roe B."/>
            <person name="Binnewies T."/>
            <person name="Ussery D."/>
            <person name="Vereecke D."/>
            <person name="Gevers D."/>
            <person name="Holsters M."/>
            <person name="Oyaizu H."/>
        </authorList>
    </citation>
    <scope>NUCLEOTIDE SEQUENCE [LARGE SCALE GENOMIC DNA]</scope>
    <source>
        <strain>ATCC 43989 / DSM 5975 / JCM 20966 / LMG 6465 / NBRC 14845 / NCIMB 13405 / ORS 571</strain>
    </source>
</reference>